<comment type="function">
    <text evidence="1">Protease inhibitor.</text>
</comment>
<comment type="subunit">
    <text>Plasma proteins HP-20, HP-25, HP-27 and HP-55 form a 140 kDa complex via disulfide bonds in the plasma.</text>
</comment>
<comment type="subcellular location">
    <subcellularLocation>
        <location evidence="3">Secreted</location>
    </subcellularLocation>
</comment>
<comment type="tissue specificity">
    <text evidence="3">Plasma; synthesized in the liver.</text>
</comment>
<comment type="developmental stage">
    <text evidence="3">The protein complex disappears from the plasma at onset of hibernation and reappears as hibernation ceases.</text>
</comment>
<comment type="domain">
    <text evidence="1">The reactive center loop (RCL) extends out from the body of the protein and directs binding to the target protease. The protease cleaves the serpin at the reactive site within the RCL, establishing a covalent linkage between the serpin reactive site and the active site of the protease. The resulting inactive serpin-protease complex is highly stable (By similarity).</text>
</comment>
<comment type="PTM">
    <text>The N-terminus is blocked.</text>
</comment>
<comment type="similarity">
    <text evidence="4">Belongs to the serpin family.</text>
</comment>
<organism>
    <name type="scientific">Tamias sibiricus</name>
    <name type="common">Siberian chipmunk</name>
    <name type="synonym">Eutamias sibiricus</name>
    <dbReference type="NCBI Taxonomy" id="64680"/>
    <lineage>
        <taxon>Eukaryota</taxon>
        <taxon>Metazoa</taxon>
        <taxon>Chordata</taxon>
        <taxon>Craniata</taxon>
        <taxon>Vertebrata</taxon>
        <taxon>Euteleostomi</taxon>
        <taxon>Mammalia</taxon>
        <taxon>Eutheria</taxon>
        <taxon>Euarchontoglires</taxon>
        <taxon>Glires</taxon>
        <taxon>Rodentia</taxon>
        <taxon>Sciuromorpha</taxon>
        <taxon>Sciuridae</taxon>
        <taxon>Xerinae</taxon>
        <taxon>Marmotini</taxon>
        <taxon>Tamias</taxon>
    </lineage>
</organism>
<name>HP55_TAMSI</name>
<proteinExistence type="evidence at protein level"/>
<reference key="1">
    <citation type="journal article" date="1997" name="Gene">
        <title>Expression of multiple alpha1-antitrypsin-like genes in hibernating species of the squirrel family.</title>
        <authorList>
            <person name="Takamatsu N."/>
            <person name="Kojima M."/>
            <person name="Taniyama M."/>
            <person name="Ohba K."/>
            <person name="Uematsu T."/>
            <person name="Segawa C."/>
            <person name="Tsutou S."/>
            <person name="Watanabe M."/>
            <person name="Kondo J."/>
            <person name="Kondo N."/>
            <person name="Shiba T."/>
        </authorList>
    </citation>
    <scope>NUCLEOTIDE SEQUENCE [MRNA]</scope>
    <source>
        <tissue>Liver</tissue>
    </source>
</reference>
<reference key="2">
    <citation type="journal article" date="1992" name="J. Biol. Chem.">
        <title>Identification of novel blood proteins specific for mammalian hibernation.</title>
        <authorList>
            <person name="Kondo N."/>
            <person name="Kondo J."/>
        </authorList>
    </citation>
    <scope>PROTEIN SEQUENCE OF 35-54; 89-126; 149-193; 279-292; 303-344; 356-375; 385-399 AND 408-413</scope>
    <scope>PYROGLUTAMATE FORMATION AT GLN-25</scope>
    <scope>INTERACTION WITH HP-20; HP-25 AND HP-27</scope>
    <scope>SUBCELLULAR LOCATION</scope>
    <scope>TISSUE SPECIFICITY</scope>
    <scope>DEVELOPMENTAL STAGE</scope>
    <source>
        <tissue>Plasma</tissue>
    </source>
</reference>
<feature type="signal peptide" evidence="2">
    <location>
        <begin position="1"/>
        <end position="24"/>
    </location>
</feature>
<feature type="chain" id="PRO_0000032402" description="Hibernation-specific plasma protein HP-55">
    <location>
        <begin position="25"/>
        <end position="413"/>
    </location>
</feature>
<feature type="region of interest" description="RCL">
    <location>
        <begin position="368"/>
        <end position="387"/>
    </location>
</feature>
<feature type="site" description="Reactive bond" evidence="1">
    <location>
        <begin position="377"/>
        <end position="378"/>
    </location>
</feature>
<feature type="modified residue" description="Pyrrolidone carboxylic acid" evidence="5">
    <location>
        <position position="25"/>
    </location>
</feature>
<feature type="glycosylation site" description="N-linked (GlcNAc...) asparagine" evidence="2">
    <location>
        <position position="65"/>
    </location>
</feature>
<feature type="glycosylation site" description="N-linked (GlcNAc...) asparagine" evidence="2">
    <location>
        <position position="102"/>
    </location>
</feature>
<feature type="glycosylation site" description="N-linked (GlcNAc...) asparagine" evidence="2">
    <location>
        <position position="165"/>
    </location>
</feature>
<feature type="glycosylation site" description="N-linked (GlcNAc...) asparagine" evidence="2">
    <location>
        <position position="266"/>
    </location>
</feature>
<feature type="sequence conflict" description="In Ref. 2; AA sequence." evidence="4" ref="2">
    <original>F</original>
    <variation>K</variation>
    <location>
        <position position="115"/>
    </location>
</feature>
<feature type="sequence conflict" description="In Ref. 2; AA sequence." evidence="4" ref="2">
    <original>R</original>
    <variation>Q</variation>
    <location>
        <position position="124"/>
    </location>
</feature>
<feature type="sequence conflict" description="In Ref. 2; AA sequence." evidence="4" ref="2">
    <original>S</original>
    <variation>Y</variation>
    <location>
        <position position="292"/>
    </location>
</feature>
<feature type="sequence conflict" description="In Ref. 2; AA sequence." evidence="4" ref="2">
    <original>S</original>
    <variation>T</variation>
    <location>
        <position position="338"/>
    </location>
</feature>
<evidence type="ECO:0000250" key="1"/>
<evidence type="ECO:0000255" key="2"/>
<evidence type="ECO:0000269" key="3">
    <source>
    </source>
</evidence>
<evidence type="ECO:0000305" key="4"/>
<evidence type="ECO:0000305" key="5">
    <source>
    </source>
</evidence>
<sequence length="413" mass="45992">MPSSISWGLLLLAALSCLGPGSLAQDAQETEASKQDQEHPASHRIAPHLAEFALSLYRVLARQSNTTNIFFSPVSIASALAMLSLGTKGDTHTQILEGLDFNLTEMAEADIHQGFQNLLQTLNRPNTQLQLTSGNVLFIHQNLKLLDKFLENIKSLYHSGAFPTNFTNTEEARQQINSYVEQGTQGKIVELVKELDRDTVLALVNYIFFKGKWLKPFNVKNIREEDFHVDEATTVRVPMMYRVGMFPVHYCRTLASLVLQMDYLGNATAIFLLPDKGKMQHLEDTISTEILSKLLKDRQTSKYQVYFPRVSISGTYDLKDVLSSLGITRVFSRVADLSGVTEDAPLTVSKVLHKAVLDMDEEGTEAAGGTVLGAEAMLQAPIMKFDRPFLVVIYEHNTKSPLFVGKVVNPTQQ</sequence>
<protein>
    <recommendedName>
        <fullName>Hibernation-specific plasma protein HP-55</fullName>
    </recommendedName>
    <alternativeName>
        <fullName>CM55-ML</fullName>
    </alternativeName>
    <alternativeName>
        <fullName>Hibernator-specific blood complex, 55 kDa subunit</fullName>
    </alternativeName>
</protein>
<accession>Q09055</accession>
<accession>O54756</accession>
<dbReference type="EMBL" id="AB000545">
    <property type="protein sequence ID" value="BAA24415.1"/>
    <property type="molecule type" value="mRNA"/>
</dbReference>
<dbReference type="SMR" id="Q09055"/>
<dbReference type="MEROPS" id="I04.001"/>
<dbReference type="GO" id="GO:0005615">
    <property type="term" value="C:extracellular space"/>
    <property type="evidence" value="ECO:0007669"/>
    <property type="project" value="InterPro"/>
</dbReference>
<dbReference type="GO" id="GO:0004867">
    <property type="term" value="F:serine-type endopeptidase inhibitor activity"/>
    <property type="evidence" value="ECO:0007669"/>
    <property type="project" value="UniProtKB-KW"/>
</dbReference>
<dbReference type="GO" id="GO:0042750">
    <property type="term" value="P:hibernation"/>
    <property type="evidence" value="ECO:0007669"/>
    <property type="project" value="UniProtKB-KW"/>
</dbReference>
<dbReference type="CDD" id="cd02056">
    <property type="entry name" value="serpinA1_A1AT"/>
    <property type="match status" value="1"/>
</dbReference>
<dbReference type="FunFam" id="2.30.39.10:FF:000003">
    <property type="entry name" value="alpha-1-antitrypsin isoform X1"/>
    <property type="match status" value="1"/>
</dbReference>
<dbReference type="FunFam" id="3.30.497.10:FF:000001">
    <property type="entry name" value="Serine protease inhibitor"/>
    <property type="match status" value="1"/>
</dbReference>
<dbReference type="FunFam" id="2.10.310.10:FF:000001">
    <property type="entry name" value="Serpin family A member 1"/>
    <property type="match status" value="1"/>
</dbReference>
<dbReference type="Gene3D" id="2.30.39.10">
    <property type="entry name" value="Alpha-1-antitrypsin, domain 1"/>
    <property type="match status" value="1"/>
</dbReference>
<dbReference type="Gene3D" id="3.30.497.10">
    <property type="entry name" value="Antithrombin, subunit I, domain 2"/>
    <property type="match status" value="1"/>
</dbReference>
<dbReference type="Gene3D" id="2.10.310.10">
    <property type="entry name" value="Serpins superfamily"/>
    <property type="match status" value="1"/>
</dbReference>
<dbReference type="InterPro" id="IPR023795">
    <property type="entry name" value="Serpin_CS"/>
</dbReference>
<dbReference type="InterPro" id="IPR023796">
    <property type="entry name" value="Serpin_dom"/>
</dbReference>
<dbReference type="InterPro" id="IPR000215">
    <property type="entry name" value="Serpin_fam"/>
</dbReference>
<dbReference type="InterPro" id="IPR036186">
    <property type="entry name" value="Serpin_sf"/>
</dbReference>
<dbReference type="InterPro" id="IPR042178">
    <property type="entry name" value="Serpin_sf_1"/>
</dbReference>
<dbReference type="InterPro" id="IPR042185">
    <property type="entry name" value="Serpin_sf_2"/>
</dbReference>
<dbReference type="PANTHER" id="PTHR11461:SF165">
    <property type="entry name" value="ALPHA-1-ANTITRYPSIN"/>
    <property type="match status" value="1"/>
</dbReference>
<dbReference type="PANTHER" id="PTHR11461">
    <property type="entry name" value="SERINE PROTEASE INHIBITOR, SERPIN"/>
    <property type="match status" value="1"/>
</dbReference>
<dbReference type="Pfam" id="PF00079">
    <property type="entry name" value="Serpin"/>
    <property type="match status" value="1"/>
</dbReference>
<dbReference type="SMART" id="SM00093">
    <property type="entry name" value="SERPIN"/>
    <property type="match status" value="1"/>
</dbReference>
<dbReference type="SUPFAM" id="SSF56574">
    <property type="entry name" value="Serpins"/>
    <property type="match status" value="1"/>
</dbReference>
<dbReference type="PROSITE" id="PS00284">
    <property type="entry name" value="SERPIN"/>
    <property type="match status" value="1"/>
</dbReference>
<keyword id="KW-0903">Direct protein sequencing</keyword>
<keyword id="KW-1015">Disulfide bond</keyword>
<keyword id="KW-0325">Glycoprotein</keyword>
<keyword id="KW-0909">Hibernation</keyword>
<keyword id="KW-0646">Protease inhibitor</keyword>
<keyword id="KW-0873">Pyrrolidone carboxylic acid</keyword>
<keyword id="KW-0964">Secreted</keyword>
<keyword id="KW-0722">Serine protease inhibitor</keyword>
<keyword id="KW-0732">Signal</keyword>